<evidence type="ECO:0000250" key="1"/>
<evidence type="ECO:0000269" key="2">
    <source>
    </source>
</evidence>
<evidence type="ECO:0000269" key="3">
    <source>
    </source>
</evidence>
<evidence type="ECO:0000305" key="4"/>
<dbReference type="EC" id="4.2.1.11"/>
<dbReference type="EMBL" id="U82437">
    <property type="protein sequence ID" value="AAG42022.2"/>
    <property type="molecule type" value="mRNA"/>
</dbReference>
<dbReference type="RefSeq" id="XP_018379265.1">
    <property type="nucleotide sequence ID" value="XM_018535292.1"/>
</dbReference>
<dbReference type="SMR" id="Q9HDT3"/>
<dbReference type="Allergome" id="14">
    <property type="allergen name" value="Alt a 6"/>
</dbReference>
<dbReference type="Allergome" id="3063">
    <property type="allergen name" value="Alt a 6.0101"/>
</dbReference>
<dbReference type="KEGG" id="aalt:CC77DRAFT_949988"/>
<dbReference type="VEuPathDB" id="FungiDB:CC77DRAFT_949988"/>
<dbReference type="OMA" id="RCMMSHR"/>
<dbReference type="UniPathway" id="UPA00109">
    <property type="reaction ID" value="UER00187"/>
</dbReference>
<dbReference type="GO" id="GO:0000015">
    <property type="term" value="C:phosphopyruvate hydratase complex"/>
    <property type="evidence" value="ECO:0007669"/>
    <property type="project" value="InterPro"/>
</dbReference>
<dbReference type="GO" id="GO:0000287">
    <property type="term" value="F:magnesium ion binding"/>
    <property type="evidence" value="ECO:0007669"/>
    <property type="project" value="InterPro"/>
</dbReference>
<dbReference type="GO" id="GO:0004634">
    <property type="term" value="F:phosphopyruvate hydratase activity"/>
    <property type="evidence" value="ECO:0007669"/>
    <property type="project" value="UniProtKB-EC"/>
</dbReference>
<dbReference type="GO" id="GO:0006096">
    <property type="term" value="P:glycolytic process"/>
    <property type="evidence" value="ECO:0007669"/>
    <property type="project" value="UniProtKB-UniPathway"/>
</dbReference>
<dbReference type="CDD" id="cd03313">
    <property type="entry name" value="enolase"/>
    <property type="match status" value="1"/>
</dbReference>
<dbReference type="FunFam" id="3.30.390.10:FF:000001">
    <property type="entry name" value="Enolase"/>
    <property type="match status" value="1"/>
</dbReference>
<dbReference type="FunFam" id="3.20.20.120:FF:000002">
    <property type="entry name" value="Enolase 1"/>
    <property type="match status" value="1"/>
</dbReference>
<dbReference type="Gene3D" id="3.20.20.120">
    <property type="entry name" value="Enolase-like C-terminal domain"/>
    <property type="match status" value="1"/>
</dbReference>
<dbReference type="Gene3D" id="3.30.390.10">
    <property type="entry name" value="Enolase-like, N-terminal domain"/>
    <property type="match status" value="1"/>
</dbReference>
<dbReference type="HAMAP" id="MF_00318">
    <property type="entry name" value="Enolase"/>
    <property type="match status" value="1"/>
</dbReference>
<dbReference type="InterPro" id="IPR000941">
    <property type="entry name" value="Enolase"/>
</dbReference>
<dbReference type="InterPro" id="IPR036849">
    <property type="entry name" value="Enolase-like_C_sf"/>
</dbReference>
<dbReference type="InterPro" id="IPR029017">
    <property type="entry name" value="Enolase-like_N"/>
</dbReference>
<dbReference type="InterPro" id="IPR020810">
    <property type="entry name" value="Enolase_C"/>
</dbReference>
<dbReference type="InterPro" id="IPR020809">
    <property type="entry name" value="Enolase_CS"/>
</dbReference>
<dbReference type="InterPro" id="IPR020811">
    <property type="entry name" value="Enolase_N"/>
</dbReference>
<dbReference type="NCBIfam" id="TIGR01060">
    <property type="entry name" value="eno"/>
    <property type="match status" value="1"/>
</dbReference>
<dbReference type="PANTHER" id="PTHR11902">
    <property type="entry name" value="ENOLASE"/>
    <property type="match status" value="1"/>
</dbReference>
<dbReference type="PANTHER" id="PTHR11902:SF1">
    <property type="entry name" value="ENOLASE"/>
    <property type="match status" value="1"/>
</dbReference>
<dbReference type="Pfam" id="PF00113">
    <property type="entry name" value="Enolase_C"/>
    <property type="match status" value="1"/>
</dbReference>
<dbReference type="Pfam" id="PF03952">
    <property type="entry name" value="Enolase_N"/>
    <property type="match status" value="1"/>
</dbReference>
<dbReference type="PIRSF" id="PIRSF001400">
    <property type="entry name" value="Enolase"/>
    <property type="match status" value="1"/>
</dbReference>
<dbReference type="PRINTS" id="PR00148">
    <property type="entry name" value="ENOLASE"/>
</dbReference>
<dbReference type="SFLD" id="SFLDF00002">
    <property type="entry name" value="enolase"/>
    <property type="match status" value="1"/>
</dbReference>
<dbReference type="SFLD" id="SFLDG00178">
    <property type="entry name" value="enolase"/>
    <property type="match status" value="1"/>
</dbReference>
<dbReference type="SMART" id="SM01192">
    <property type="entry name" value="Enolase_C"/>
    <property type="match status" value="1"/>
</dbReference>
<dbReference type="SMART" id="SM01193">
    <property type="entry name" value="Enolase_N"/>
    <property type="match status" value="1"/>
</dbReference>
<dbReference type="SUPFAM" id="SSF51604">
    <property type="entry name" value="Enolase C-terminal domain-like"/>
    <property type="match status" value="1"/>
</dbReference>
<dbReference type="SUPFAM" id="SSF54826">
    <property type="entry name" value="Enolase N-terminal domain-like"/>
    <property type="match status" value="1"/>
</dbReference>
<dbReference type="PROSITE" id="PS00164">
    <property type="entry name" value="ENOLASE"/>
    <property type="match status" value="1"/>
</dbReference>
<sequence>MTITKIHARSVYDSRGNPTVEVDIVTETGLHRAIVPSGASTGSHEACELRDGDKSKWGGKGVTKAVANVNDTIAPALIKEKLDVKDQSAVDAFLNKLDGTTNKTNLGANAILGVSMAIAKAAAAEKGVPLYAHISDLAGTKKPYVLPVPFQNVLNGGSHAGGRLAFQEFMIVPCEAPTFSEAMRQGAEVYQKLKALAKKTYGQSAGNVGDEGGVAPDIQTAEEALDLITKAIEEAGYTGKIKIAMDVASSEFYKADEKKYDLDFKNPDSDKSKWLTYEQLAEMYKSLAEKYPIVSIEDPFAEDDWEAWSYFFKTYDGQIVGDDLTVTNPEFIKKAIELKSCNALLLKVNQIGTITEAIQAAKDAFGAGWGVMVSHRSGETEDVTIADIVVGLRSGQIKTGAPARSERLAKLNQILRIEEELGDNAVYAGNNFRTAVNL</sequence>
<organism>
    <name type="scientific">Alternaria alternata</name>
    <name type="common">Alternaria rot fungus</name>
    <name type="synonym">Torula alternata</name>
    <dbReference type="NCBI Taxonomy" id="5599"/>
    <lineage>
        <taxon>Eukaryota</taxon>
        <taxon>Fungi</taxon>
        <taxon>Dikarya</taxon>
        <taxon>Ascomycota</taxon>
        <taxon>Pezizomycotina</taxon>
        <taxon>Dothideomycetes</taxon>
        <taxon>Pleosporomycetidae</taxon>
        <taxon>Pleosporales</taxon>
        <taxon>Pleosporineae</taxon>
        <taxon>Pleosporaceae</taxon>
        <taxon>Alternaria</taxon>
        <taxon>Alternaria sect. Alternaria</taxon>
        <taxon>Alternaria alternata complex</taxon>
    </lineage>
</organism>
<reference key="1">
    <citation type="journal article" date="2000" name="J. Allergy Clin. Immunol.">
        <title>IgE-binding epitopes of enolases, a class of highly conserved fungal allergens.</title>
        <authorList>
            <person name="Simon-Nobbe B."/>
            <person name="Probst G."/>
            <person name="Kajava A.V."/>
            <person name="Oberkofler H."/>
            <person name="Susani M."/>
            <person name="Crameri R."/>
            <person name="Ferreira F."/>
            <person name="Ebner C."/>
            <person name="Breitenbach M."/>
        </authorList>
    </citation>
    <scope>NUCLEOTIDE SEQUENCE [MRNA]</scope>
    <scope>ALLERGEN</scope>
    <source>
        <strain>08-0203-Berlin</strain>
    </source>
</reference>
<reference key="2">
    <citation type="journal article" date="1997" name="Int. Arch. Allergy Immunol.">
        <title>Enolases are highly conserved fungal allergens.</title>
        <authorList>
            <person name="Breitenbach M."/>
            <person name="Simon B."/>
            <person name="Probst G."/>
            <person name="Oberkofler H."/>
            <person name="Ferreira F."/>
            <person name="Briza P."/>
            <person name="Achatz G."/>
            <person name="Unger A."/>
            <person name="Ebner C."/>
            <person name="Kraft D."/>
            <person name="Hirschwehr R."/>
        </authorList>
    </citation>
    <scope>ALLERGEN</scope>
</reference>
<reference key="3">
    <citation type="journal article" date="2002" name="Chem. Immunol.">
        <title>The allergens of Cladosporium herbarum and Alternaria alternata.</title>
        <authorList>
            <person name="Breitenbach M."/>
            <person name="Simon-Nobbe B."/>
        </authorList>
    </citation>
    <scope>REVIEW</scope>
</reference>
<reference key="4">
    <citation type="journal article" date="2008" name="Int. Arch. Allergy Immunol.">
        <title>The spectrum of fungal allergy.</title>
        <authorList>
            <person name="Simon-Nobbe B."/>
            <person name="Denk U."/>
            <person name="Poell V."/>
            <person name="Rid R."/>
            <person name="Breitenbach M."/>
        </authorList>
    </citation>
    <scope>REVIEW</scope>
</reference>
<keyword id="KW-0020">Allergen</keyword>
<keyword id="KW-0963">Cytoplasm</keyword>
<keyword id="KW-0324">Glycolysis</keyword>
<keyword id="KW-0456">Lyase</keyword>
<keyword id="KW-0460">Magnesium</keyword>
<keyword id="KW-0479">Metal-binding</keyword>
<comment type="catalytic activity">
    <reaction>
        <text>(2R)-2-phosphoglycerate = phosphoenolpyruvate + H2O</text>
        <dbReference type="Rhea" id="RHEA:10164"/>
        <dbReference type="ChEBI" id="CHEBI:15377"/>
        <dbReference type="ChEBI" id="CHEBI:58289"/>
        <dbReference type="ChEBI" id="CHEBI:58702"/>
        <dbReference type="EC" id="4.2.1.11"/>
    </reaction>
</comment>
<comment type="cofactor">
    <cofactor evidence="1">
        <name>Mg(2+)</name>
        <dbReference type="ChEBI" id="CHEBI:18420"/>
    </cofactor>
    <text evidence="1">Mg(2+) is required for catalysis and for stabilizing the dimer.</text>
</comment>
<comment type="pathway">
    <text>Carbohydrate degradation; glycolysis; pyruvate from D-glyceraldehyde 3-phosphate: step 4/5.</text>
</comment>
<comment type="subunit">
    <text evidence="1">Homodimer.</text>
</comment>
<comment type="subcellular location">
    <subcellularLocation>
        <location evidence="1">Cytoplasm</location>
    </subcellularLocation>
</comment>
<comment type="allergen">
    <text evidence="2 3">Causes an allergic reaction in human. Binds to IgE.</text>
</comment>
<comment type="similarity">
    <text evidence="4">Belongs to the enolase family.</text>
</comment>
<gene>
    <name type="primary">ENO</name>
    <name type="synonym">ALTA11</name>
    <name type="synonym">ALTA6</name>
</gene>
<feature type="chain" id="PRO_0000134039" description="Enolase">
    <location>
        <begin position="1"/>
        <end position="438"/>
    </location>
</feature>
<feature type="active site" description="Proton donor" evidence="1">
    <location>
        <position position="211"/>
    </location>
</feature>
<feature type="active site" description="Proton acceptor" evidence="1">
    <location>
        <position position="347"/>
    </location>
</feature>
<feature type="binding site" evidence="1">
    <location>
        <position position="159"/>
    </location>
    <ligand>
        <name>substrate</name>
    </ligand>
</feature>
<feature type="binding site" evidence="1">
    <location>
        <position position="168"/>
    </location>
    <ligand>
        <name>substrate</name>
    </ligand>
</feature>
<feature type="binding site" evidence="1">
    <location>
        <position position="246"/>
    </location>
    <ligand>
        <name>Mg(2+)</name>
        <dbReference type="ChEBI" id="CHEBI:18420"/>
    </ligand>
</feature>
<feature type="binding site" evidence="1">
    <location>
        <position position="297"/>
    </location>
    <ligand>
        <name>Mg(2+)</name>
        <dbReference type="ChEBI" id="CHEBI:18420"/>
    </ligand>
</feature>
<feature type="binding site" evidence="1">
    <location>
        <position position="297"/>
    </location>
    <ligand>
        <name>substrate</name>
    </ligand>
</feature>
<feature type="binding site" evidence="1">
    <location>
        <position position="322"/>
    </location>
    <ligand>
        <name>Mg(2+)</name>
        <dbReference type="ChEBI" id="CHEBI:18420"/>
    </ligand>
</feature>
<feature type="binding site" evidence="1">
    <location>
        <position position="322"/>
    </location>
    <ligand>
        <name>substrate</name>
    </ligand>
</feature>
<feature type="binding site" evidence="1">
    <location>
        <begin position="374"/>
        <end position="377"/>
    </location>
    <ligand>
        <name>substrate</name>
    </ligand>
</feature>
<feature type="binding site" evidence="1">
    <location>
        <position position="398"/>
    </location>
    <ligand>
        <name>substrate</name>
    </ligand>
</feature>
<accession>Q9HDT3</accession>
<protein>
    <recommendedName>
        <fullName>Enolase</fullName>
        <ecNumber>4.2.1.11</ecNumber>
    </recommendedName>
    <alternativeName>
        <fullName>2-phospho-D-glycerate hydro-lyase</fullName>
    </alternativeName>
    <alternativeName>
        <fullName>2-phosphoglycerate dehydratase</fullName>
    </alternativeName>
    <alternativeName>
        <fullName>Allergen Alt a 11</fullName>
    </alternativeName>
    <alternativeName>
        <fullName>Allergen Alt a 5</fullName>
    </alternativeName>
    <alternativeName>
        <fullName>Allergen Alt a XI</fullName>
    </alternativeName>
    <allergenName>Alt a 6</allergenName>
</protein>
<proteinExistence type="evidence at protein level"/>
<name>ENO_ALTAL</name>